<name>YCF3_DIOEL</name>
<feature type="chain" id="PRO_0000325061" description="Photosystem I assembly protein Ycf3">
    <location>
        <begin position="1"/>
        <end position="172"/>
    </location>
</feature>
<feature type="repeat" description="TPR 1">
    <location>
        <begin position="35"/>
        <end position="70"/>
    </location>
</feature>
<feature type="repeat" description="TPR 2">
    <location>
        <begin position="74"/>
        <end position="107"/>
    </location>
</feature>
<feature type="repeat" description="TPR 3">
    <location>
        <begin position="122"/>
        <end position="155"/>
    </location>
</feature>
<comment type="function">
    <text evidence="1">Essential for the assembly of the photosystem I (PSI) complex. May act as a chaperone-like factor to guide the assembly of the PSI subunits.</text>
</comment>
<comment type="subcellular location">
    <subcellularLocation>
        <location evidence="1">Plastid</location>
        <location evidence="1">Chloroplast thylakoid membrane</location>
        <topology evidence="1">Peripheral membrane protein</topology>
    </subcellularLocation>
</comment>
<comment type="similarity">
    <text evidence="1">Belongs to the Ycf3 family.</text>
</comment>
<accession>A6MMK8</accession>
<organism>
    <name type="scientific">Dioscorea elephantipes</name>
    <name type="common">Elephant's foot yam</name>
    <name type="synonym">Testudinaria elephantipes</name>
    <dbReference type="NCBI Taxonomy" id="145284"/>
    <lineage>
        <taxon>Eukaryota</taxon>
        <taxon>Viridiplantae</taxon>
        <taxon>Streptophyta</taxon>
        <taxon>Embryophyta</taxon>
        <taxon>Tracheophyta</taxon>
        <taxon>Spermatophyta</taxon>
        <taxon>Magnoliopsida</taxon>
        <taxon>Liliopsida</taxon>
        <taxon>Dioscoreales</taxon>
        <taxon>Dioscoreaceae</taxon>
        <taxon>Dioscorea</taxon>
    </lineage>
</organism>
<evidence type="ECO:0000255" key="1">
    <source>
        <dbReference type="HAMAP-Rule" id="MF_00439"/>
    </source>
</evidence>
<gene>
    <name evidence="1" type="primary">ycf3</name>
</gene>
<dbReference type="EMBL" id="EF380353">
    <property type="protein sequence ID" value="ABR01431.1"/>
    <property type="molecule type" value="Genomic_DNA"/>
</dbReference>
<dbReference type="RefSeq" id="YP_001294353.2">
    <property type="nucleotide sequence ID" value="NC_009601.1"/>
</dbReference>
<dbReference type="SMR" id="A6MMK8"/>
<dbReference type="GeneID" id="5236653"/>
<dbReference type="GO" id="GO:0009535">
    <property type="term" value="C:chloroplast thylakoid membrane"/>
    <property type="evidence" value="ECO:0007669"/>
    <property type="project" value="UniProtKB-SubCell"/>
</dbReference>
<dbReference type="GO" id="GO:0015979">
    <property type="term" value="P:photosynthesis"/>
    <property type="evidence" value="ECO:0007669"/>
    <property type="project" value="UniProtKB-UniRule"/>
</dbReference>
<dbReference type="FunFam" id="1.25.40.10:FF:000004">
    <property type="entry name" value="Photosystem I assembly protein Ycf3"/>
    <property type="match status" value="1"/>
</dbReference>
<dbReference type="Gene3D" id="1.25.40.10">
    <property type="entry name" value="Tetratricopeptide repeat domain"/>
    <property type="match status" value="1"/>
</dbReference>
<dbReference type="HAMAP" id="MF_00439">
    <property type="entry name" value="Ycf3"/>
    <property type="match status" value="1"/>
</dbReference>
<dbReference type="InterPro" id="IPR022818">
    <property type="entry name" value="PSI_Ycf3_assembly"/>
</dbReference>
<dbReference type="InterPro" id="IPR011990">
    <property type="entry name" value="TPR-like_helical_dom_sf"/>
</dbReference>
<dbReference type="InterPro" id="IPR019734">
    <property type="entry name" value="TPR_rpt"/>
</dbReference>
<dbReference type="InterPro" id="IPR051685">
    <property type="entry name" value="Ycf3/AcsC/BcsC/TPR_MFPF"/>
</dbReference>
<dbReference type="NCBIfam" id="NF002725">
    <property type="entry name" value="PRK02603.1"/>
    <property type="match status" value="1"/>
</dbReference>
<dbReference type="PANTHER" id="PTHR44943">
    <property type="entry name" value="CELLULOSE SYNTHASE OPERON PROTEIN C"/>
    <property type="match status" value="1"/>
</dbReference>
<dbReference type="PANTHER" id="PTHR44943:SF8">
    <property type="entry name" value="TPR REPEAT-CONTAINING PROTEIN MJ0263"/>
    <property type="match status" value="1"/>
</dbReference>
<dbReference type="Pfam" id="PF00515">
    <property type="entry name" value="TPR_1"/>
    <property type="match status" value="1"/>
</dbReference>
<dbReference type="SMART" id="SM00028">
    <property type="entry name" value="TPR"/>
    <property type="match status" value="2"/>
</dbReference>
<dbReference type="SUPFAM" id="SSF48452">
    <property type="entry name" value="TPR-like"/>
    <property type="match status" value="1"/>
</dbReference>
<dbReference type="PROSITE" id="PS50005">
    <property type="entry name" value="TPR"/>
    <property type="match status" value="2"/>
</dbReference>
<dbReference type="PROSITE" id="PS50293">
    <property type="entry name" value="TPR_REGION"/>
    <property type="match status" value="1"/>
</dbReference>
<protein>
    <recommendedName>
        <fullName evidence="1">Photosystem I assembly protein Ycf3</fullName>
    </recommendedName>
</protein>
<sequence length="172" mass="19819">MPRSQINGNFIDKTSSIVANILLRIIPTTSGEKKAFTYYRDGAIMSAQSEGNYAEALQNYYEATRSEIDPYDRSYILYNIGLIHTSNGEHTKALEYYFQAIERNPFLPQAFNNMAVICHYQGERAILRGDSEIAEAWFDQAAEYWKQAIGLTPGNYIEAHNWLKITRRLEFE</sequence>
<geneLocation type="chloroplast"/>
<reference key="1">
    <citation type="journal article" date="2007" name="Mol. Phylogenet. Evol.">
        <title>Phylogenetic and evolutionary implications of complete chloroplast genome sequences of four early-diverging angiosperms: Buxus (Buxaceae), Chloranthus (Chloranthaceae), Dioscorea (Dioscoreaceae), and Illicium (Schisandraceae).</title>
        <authorList>
            <person name="Hansen D.R."/>
            <person name="Dastidar S.G."/>
            <person name="Cai Z."/>
            <person name="Penaflor C."/>
            <person name="Kuehl J.V."/>
            <person name="Boore J.L."/>
            <person name="Jansen R.K."/>
        </authorList>
    </citation>
    <scope>NUCLEOTIDE SEQUENCE [LARGE SCALE GENOMIC DNA]</scope>
</reference>
<keyword id="KW-0150">Chloroplast</keyword>
<keyword id="KW-0472">Membrane</keyword>
<keyword id="KW-0602">Photosynthesis</keyword>
<keyword id="KW-0934">Plastid</keyword>
<keyword id="KW-0677">Repeat</keyword>
<keyword id="KW-0793">Thylakoid</keyword>
<keyword id="KW-0802">TPR repeat</keyword>
<proteinExistence type="inferred from homology"/>